<feature type="chain" id="PRO_0000100163" description="Fumarate and nitrate reduction regulatory protein">
    <location>
        <begin position="1"/>
        <end position="250"/>
    </location>
</feature>
<feature type="domain" description="HTH crp-type" evidence="3">
    <location>
        <begin position="164"/>
        <end position="237"/>
    </location>
</feature>
<feature type="DNA-binding region" description="H-T-H motif" evidence="3">
    <location>
        <begin position="197"/>
        <end position="216"/>
    </location>
</feature>
<feature type="region of interest" description="Essential for the oxygen-regulated activity" evidence="1">
    <location>
        <begin position="20"/>
        <end position="29"/>
    </location>
</feature>
<feature type="region of interest" description="Activating region 2A" evidence="2">
    <location>
        <begin position="47"/>
        <end position="50"/>
    </location>
</feature>
<feature type="region of interest" description="Activating region 3A" evidence="2">
    <location>
        <begin position="60"/>
        <end position="61"/>
    </location>
</feature>
<feature type="region of interest" description="Activating region 1A" evidence="2">
    <location>
        <begin position="71"/>
        <end position="75"/>
    </location>
</feature>
<feature type="region of interest" description="Activating region 3B" evidence="2">
    <location>
        <position position="81"/>
    </location>
</feature>
<feature type="region of interest" description="Activating region 3C" evidence="2">
    <location>
        <begin position="85"/>
        <end position="87"/>
    </location>
</feature>
<feature type="region of interest" description="Activating region 3D" evidence="2">
    <location>
        <position position="112"/>
    </location>
</feature>
<feature type="region of interest" description="Activating region 1B" evidence="2">
    <location>
        <begin position="116"/>
        <end position="121"/>
    </location>
</feature>
<feature type="region of interest" description="Activating region 2B" evidence="2">
    <location>
        <begin position="123"/>
        <end position="124"/>
    </location>
</feature>
<feature type="region of interest" description="Activating region 2C" evidence="2">
    <location>
        <begin position="127"/>
        <end position="128"/>
    </location>
</feature>
<feature type="region of interest" description="Dimerization" evidence="2">
    <location>
        <begin position="140"/>
        <end position="159"/>
    </location>
</feature>
<feature type="region of interest" description="Activating region 1C" evidence="2">
    <location>
        <begin position="181"/>
        <end position="191"/>
    </location>
</feature>
<feature type="binding site" evidence="2">
    <location>
        <position position="20"/>
    </location>
    <ligand>
        <name>[4Fe-4S] cluster</name>
        <dbReference type="ChEBI" id="CHEBI:49883"/>
    </ligand>
</feature>
<feature type="binding site" evidence="2">
    <location>
        <position position="23"/>
    </location>
    <ligand>
        <name>[4Fe-4S] cluster</name>
        <dbReference type="ChEBI" id="CHEBI:49883"/>
    </ligand>
</feature>
<feature type="binding site" evidence="2">
    <location>
        <position position="29"/>
    </location>
    <ligand>
        <name>[4Fe-4S] cluster</name>
        <dbReference type="ChEBI" id="CHEBI:49883"/>
    </ligand>
</feature>
<feature type="binding site" evidence="2">
    <location>
        <position position="122"/>
    </location>
    <ligand>
        <name>[4Fe-4S] cluster</name>
        <dbReference type="ChEBI" id="CHEBI:49883"/>
    </ligand>
</feature>
<reference key="1">
    <citation type="journal article" date="2001" name="Nature">
        <title>Genome sequence of enterohaemorrhagic Escherichia coli O157:H7.</title>
        <authorList>
            <person name="Perna N.T."/>
            <person name="Plunkett G. III"/>
            <person name="Burland V."/>
            <person name="Mau B."/>
            <person name="Glasner J.D."/>
            <person name="Rose D.J."/>
            <person name="Mayhew G.F."/>
            <person name="Evans P.S."/>
            <person name="Gregor J."/>
            <person name="Kirkpatrick H.A."/>
            <person name="Posfai G."/>
            <person name="Hackett J."/>
            <person name="Klink S."/>
            <person name="Boutin A."/>
            <person name="Shao Y."/>
            <person name="Miller L."/>
            <person name="Grotbeck E.J."/>
            <person name="Davis N.W."/>
            <person name="Lim A."/>
            <person name="Dimalanta E.T."/>
            <person name="Potamousis K."/>
            <person name="Apodaca J."/>
            <person name="Anantharaman T.S."/>
            <person name="Lin J."/>
            <person name="Yen G."/>
            <person name="Schwartz D.C."/>
            <person name="Welch R.A."/>
            <person name="Blattner F.R."/>
        </authorList>
    </citation>
    <scope>NUCLEOTIDE SEQUENCE [LARGE SCALE GENOMIC DNA]</scope>
    <source>
        <strain>O157:H7 / EDL933 / ATCC 700927 / EHEC</strain>
    </source>
</reference>
<reference key="2">
    <citation type="journal article" date="2001" name="DNA Res.">
        <title>Complete genome sequence of enterohemorrhagic Escherichia coli O157:H7 and genomic comparison with a laboratory strain K-12.</title>
        <authorList>
            <person name="Hayashi T."/>
            <person name="Makino K."/>
            <person name="Ohnishi M."/>
            <person name="Kurokawa K."/>
            <person name="Ishii K."/>
            <person name="Yokoyama K."/>
            <person name="Han C.-G."/>
            <person name="Ohtsubo E."/>
            <person name="Nakayama K."/>
            <person name="Murata T."/>
            <person name="Tanaka M."/>
            <person name="Tobe T."/>
            <person name="Iida T."/>
            <person name="Takami H."/>
            <person name="Honda T."/>
            <person name="Sasakawa C."/>
            <person name="Ogasawara N."/>
            <person name="Yasunaga T."/>
            <person name="Kuhara S."/>
            <person name="Shiba T."/>
            <person name="Hattori M."/>
            <person name="Shinagawa H."/>
        </authorList>
    </citation>
    <scope>NUCLEOTIDE SEQUENCE [LARGE SCALE GENOMIC DNA]</scope>
    <source>
        <strain>O157:H7 / Sakai / RIMD 0509952 / EHEC</strain>
    </source>
</reference>
<keyword id="KW-0004">4Fe-4S</keyword>
<keyword id="KW-0010">Activator</keyword>
<keyword id="KW-0963">Cytoplasm</keyword>
<keyword id="KW-0238">DNA-binding</keyword>
<keyword id="KW-0408">Iron</keyword>
<keyword id="KW-0411">Iron-sulfur</keyword>
<keyword id="KW-0479">Metal-binding</keyword>
<keyword id="KW-1185">Reference proteome</keyword>
<keyword id="KW-0678">Repressor</keyword>
<keyword id="KW-0804">Transcription</keyword>
<keyword id="KW-0805">Transcription regulation</keyword>
<evidence type="ECO:0000250" key="1"/>
<evidence type="ECO:0000255" key="2"/>
<evidence type="ECO:0000255" key="3">
    <source>
        <dbReference type="PROSITE-ProRule" id="PRU00387"/>
    </source>
</evidence>
<evidence type="ECO:0000305" key="4"/>
<accession>P0A9E7</accession>
<accession>P03019</accession>
<comment type="function">
    <text evidence="1">Global transcription factor that controls the expression of over 100 target genes in response to anoxia. It facilitates the adaptation to anaerobic growth conditions by regulating the expression of gene products that are involved in anaerobic energy metabolism. When the terminal electron acceptor, O(2), is no longer available, it represses the synthesis of enzymes involved in aerobic respiration and increases the synthesis of enzymes required for anaerobic respiration (By similarity).</text>
</comment>
<comment type="cofactor">
    <cofactor evidence="1">
        <name>[4Fe-4S] cluster</name>
        <dbReference type="ChEBI" id="CHEBI:49883"/>
    </cofactor>
    <text evidence="1">Binds 1 [4Fe-4S] cluster per subunit.</text>
</comment>
<comment type="subunit">
    <text evidence="1">Homodimer.</text>
</comment>
<comment type="subcellular location">
    <subcellularLocation>
        <location evidence="4">Cytoplasm</location>
    </subcellularLocation>
</comment>
<gene>
    <name type="primary">fnr</name>
    <name type="ordered locus">Z2433</name>
    <name type="ordered locus">ECs1915</name>
</gene>
<proteinExistence type="inferred from homology"/>
<organism>
    <name type="scientific">Escherichia coli O157:H7</name>
    <dbReference type="NCBI Taxonomy" id="83334"/>
    <lineage>
        <taxon>Bacteria</taxon>
        <taxon>Pseudomonadati</taxon>
        <taxon>Pseudomonadota</taxon>
        <taxon>Gammaproteobacteria</taxon>
        <taxon>Enterobacterales</taxon>
        <taxon>Enterobacteriaceae</taxon>
        <taxon>Escherichia</taxon>
    </lineage>
</organism>
<dbReference type="EMBL" id="AE005174">
    <property type="protein sequence ID" value="AAG56466.1"/>
    <property type="molecule type" value="Genomic_DNA"/>
</dbReference>
<dbReference type="EMBL" id="BA000007">
    <property type="protein sequence ID" value="BAB35338.1"/>
    <property type="molecule type" value="Genomic_DNA"/>
</dbReference>
<dbReference type="PIR" id="C90868">
    <property type="entry name" value="C90868"/>
</dbReference>
<dbReference type="PIR" id="F85750">
    <property type="entry name" value="F85750"/>
</dbReference>
<dbReference type="RefSeq" id="NP_309942.1">
    <property type="nucleotide sequence ID" value="NC_002695.1"/>
</dbReference>
<dbReference type="RefSeq" id="WP_000611911.1">
    <property type="nucleotide sequence ID" value="NZ_VOAI01000015.1"/>
</dbReference>
<dbReference type="SMR" id="P0A9E7"/>
<dbReference type="STRING" id="155864.Z2433"/>
<dbReference type="GeneID" id="912392"/>
<dbReference type="GeneID" id="93775469"/>
<dbReference type="KEGG" id="ece:Z2433"/>
<dbReference type="KEGG" id="ecs:ECs_1915"/>
<dbReference type="PATRIC" id="fig|386585.9.peg.2021"/>
<dbReference type="eggNOG" id="COG0664">
    <property type="taxonomic scope" value="Bacteria"/>
</dbReference>
<dbReference type="HOGENOM" id="CLU_075053_0_2_6"/>
<dbReference type="OMA" id="SICRIHK"/>
<dbReference type="Proteomes" id="UP000000558">
    <property type="component" value="Chromosome"/>
</dbReference>
<dbReference type="Proteomes" id="UP000002519">
    <property type="component" value="Chromosome"/>
</dbReference>
<dbReference type="GO" id="GO:0005829">
    <property type="term" value="C:cytosol"/>
    <property type="evidence" value="ECO:0007669"/>
    <property type="project" value="TreeGrafter"/>
</dbReference>
<dbReference type="GO" id="GO:0051539">
    <property type="term" value="F:4 iron, 4 sulfur cluster binding"/>
    <property type="evidence" value="ECO:0007669"/>
    <property type="project" value="UniProtKB-KW"/>
</dbReference>
<dbReference type="GO" id="GO:0003677">
    <property type="term" value="F:DNA binding"/>
    <property type="evidence" value="ECO:0007669"/>
    <property type="project" value="UniProtKB-KW"/>
</dbReference>
<dbReference type="GO" id="GO:0003700">
    <property type="term" value="F:DNA-binding transcription factor activity"/>
    <property type="evidence" value="ECO:0007669"/>
    <property type="project" value="InterPro"/>
</dbReference>
<dbReference type="GO" id="GO:0046872">
    <property type="term" value="F:metal ion binding"/>
    <property type="evidence" value="ECO:0007669"/>
    <property type="project" value="UniProtKB-KW"/>
</dbReference>
<dbReference type="CDD" id="cd00038">
    <property type="entry name" value="CAP_ED"/>
    <property type="match status" value="1"/>
</dbReference>
<dbReference type="CDD" id="cd00092">
    <property type="entry name" value="HTH_CRP"/>
    <property type="match status" value="1"/>
</dbReference>
<dbReference type="FunFam" id="1.10.10.10:FF:000028">
    <property type="entry name" value="Fumarate/nitrate reduction transcriptional regulator Fnr"/>
    <property type="match status" value="1"/>
</dbReference>
<dbReference type="FunFam" id="2.60.120.10:FF:000004">
    <property type="entry name" value="Fumarate/nitrate reduction transcriptional regulator Fnr"/>
    <property type="match status" value="1"/>
</dbReference>
<dbReference type="Gene3D" id="2.60.120.10">
    <property type="entry name" value="Jelly Rolls"/>
    <property type="match status" value="1"/>
</dbReference>
<dbReference type="Gene3D" id="1.10.10.10">
    <property type="entry name" value="Winged helix-like DNA-binding domain superfamily/Winged helix DNA-binding domain"/>
    <property type="match status" value="1"/>
</dbReference>
<dbReference type="InterPro" id="IPR000595">
    <property type="entry name" value="cNMP-bd_dom"/>
</dbReference>
<dbReference type="InterPro" id="IPR018490">
    <property type="entry name" value="cNMP-bd_dom_sf"/>
</dbReference>
<dbReference type="InterPro" id="IPR050397">
    <property type="entry name" value="Env_Response_Regulators"/>
</dbReference>
<dbReference type="InterPro" id="IPR012318">
    <property type="entry name" value="HTH_CRP"/>
</dbReference>
<dbReference type="InterPro" id="IPR014710">
    <property type="entry name" value="RmlC-like_jellyroll"/>
</dbReference>
<dbReference type="InterPro" id="IPR018335">
    <property type="entry name" value="Tscrpt_reg_HTH_Crp-type_CS"/>
</dbReference>
<dbReference type="InterPro" id="IPR036388">
    <property type="entry name" value="WH-like_DNA-bd_sf"/>
</dbReference>
<dbReference type="InterPro" id="IPR036390">
    <property type="entry name" value="WH_DNA-bd_sf"/>
</dbReference>
<dbReference type="NCBIfam" id="NF008365">
    <property type="entry name" value="PRK11161.1"/>
    <property type="match status" value="1"/>
</dbReference>
<dbReference type="PANTHER" id="PTHR24567">
    <property type="entry name" value="CRP FAMILY TRANSCRIPTIONAL REGULATORY PROTEIN"/>
    <property type="match status" value="1"/>
</dbReference>
<dbReference type="PANTHER" id="PTHR24567:SF75">
    <property type="entry name" value="FUMARATE AND NITRATE REDUCTION REGULATORY PROTEIN"/>
    <property type="match status" value="1"/>
</dbReference>
<dbReference type="Pfam" id="PF00027">
    <property type="entry name" value="cNMP_binding"/>
    <property type="match status" value="1"/>
</dbReference>
<dbReference type="Pfam" id="PF13545">
    <property type="entry name" value="HTH_Crp_2"/>
    <property type="match status" value="1"/>
</dbReference>
<dbReference type="PRINTS" id="PR00034">
    <property type="entry name" value="HTHCRP"/>
</dbReference>
<dbReference type="SMART" id="SM00100">
    <property type="entry name" value="cNMP"/>
    <property type="match status" value="1"/>
</dbReference>
<dbReference type="SMART" id="SM00419">
    <property type="entry name" value="HTH_CRP"/>
    <property type="match status" value="1"/>
</dbReference>
<dbReference type="SUPFAM" id="SSF51206">
    <property type="entry name" value="cAMP-binding domain-like"/>
    <property type="match status" value="1"/>
</dbReference>
<dbReference type="SUPFAM" id="SSF46785">
    <property type="entry name" value="Winged helix' DNA-binding domain"/>
    <property type="match status" value="1"/>
</dbReference>
<dbReference type="PROSITE" id="PS50042">
    <property type="entry name" value="CNMP_BINDING_3"/>
    <property type="match status" value="1"/>
</dbReference>
<dbReference type="PROSITE" id="PS00042">
    <property type="entry name" value="HTH_CRP_1"/>
    <property type="match status" value="1"/>
</dbReference>
<dbReference type="PROSITE" id="PS51063">
    <property type="entry name" value="HTH_CRP_2"/>
    <property type="match status" value="1"/>
</dbReference>
<protein>
    <recommendedName>
        <fullName>Fumarate and nitrate reduction regulatory protein</fullName>
    </recommendedName>
</protein>
<name>FNR_ECO57</name>
<sequence>MIPEKRIIRRIQSGGCAIHCQDCSISQLCIPFTLNEHELDQLDNIIERKKPIQKGQTLFKAGDELKSLYAIRSGTIKSYTITEQGDEQITGFHLAGDLVGFDAIGSGHHPSFAQALETSMVCEIPFETLDDLSGKMPNLRQQMMRLMSGEIKGDQDMILLLSKKNAEERLAAFIYNLSRRFAQRGFSPREFRLTMTRGDIGNYLGLTVETISRLLGRFQKSGMLAVKGKYITIENNDALAQLAGHTRNVA</sequence>